<dbReference type="EMBL" id="U75930">
    <property type="protein sequence ID" value="AAC59115.1"/>
    <property type="molecule type" value="Genomic_DNA"/>
</dbReference>
<dbReference type="RefSeq" id="NP_046272.1">
    <property type="nucleotide sequence ID" value="NC_001875.2"/>
</dbReference>
<dbReference type="KEGG" id="vg:911982"/>
<dbReference type="OrthoDB" id="11383at10239"/>
<dbReference type="Proteomes" id="UP000009248">
    <property type="component" value="Genome"/>
</dbReference>
<protein>
    <recommendedName>
        <fullName>Uncharacterized 10.2 kDa protein</fullName>
    </recommendedName>
</protein>
<proteinExistence type="predicted"/>
<accession>O10355</accession>
<reference key="1">
    <citation type="journal article" date="1997" name="Virology">
        <title>The sequence of the Orgyia pseudotsugata multinucleocapsid nuclear polyhedrosis virus genome.</title>
        <authorList>
            <person name="Ahrens C.H."/>
            <person name="Russell R.R."/>
            <person name="Funk C.J."/>
            <person name="Evans J."/>
            <person name="Harwood S."/>
            <person name="Rohrmann G.F."/>
        </authorList>
    </citation>
    <scope>NUCLEOTIDE SEQUENCE [LARGE SCALE GENOMIC DNA]</scope>
</reference>
<gene>
    <name type="ORF">ORF116</name>
</gene>
<sequence>MLEDKDRRIQELYASLLEMSERAVQYPAKGHQTPMLCVAREFNCLRAITGQKVHVTKMKRELTDAAELVIDAMRPNPQVDLNNFVNRV</sequence>
<name>Y002_NPVOP</name>
<keyword id="KW-1185">Reference proteome</keyword>
<organismHost>
    <name type="scientific">Orgyia pseudotsugata</name>
    <name type="common">Douglas-fir tussock moth</name>
    <dbReference type="NCBI Taxonomy" id="33414"/>
</organismHost>
<feature type="chain" id="PRO_0000132941" description="Uncharacterized 10.2 kDa protein">
    <location>
        <begin position="1"/>
        <end position="88"/>
    </location>
</feature>
<organism>
    <name type="scientific">Orgyia pseudotsugata multicapsid polyhedrosis virus</name>
    <name type="common">OpMNPV</name>
    <dbReference type="NCBI Taxonomy" id="262177"/>
    <lineage>
        <taxon>Viruses</taxon>
        <taxon>Viruses incertae sedis</taxon>
        <taxon>Naldaviricetes</taxon>
        <taxon>Lefavirales</taxon>
        <taxon>Baculoviridae</taxon>
        <taxon>Alphabaculovirus</taxon>
        <taxon>Alphabaculovirus orpseudotsugatae</taxon>
    </lineage>
</organism>